<proteinExistence type="inferred from homology"/>
<keyword id="KW-0204">Cytolysis</keyword>
<keyword id="KW-0354">Hemolysis</keyword>
<keyword id="KW-0732">Signal</keyword>
<keyword id="KW-0800">Toxin</keyword>
<keyword id="KW-0843">Virulence</keyword>
<name>HLGC_STAAC</name>
<reference key="1">
    <citation type="journal article" date="2005" name="J. Bacteriol.">
        <title>Insights on evolution of virulence and resistance from the complete genome analysis of an early methicillin-resistant Staphylococcus aureus strain and a biofilm-producing methicillin-resistant Staphylococcus epidermidis strain.</title>
        <authorList>
            <person name="Gill S.R."/>
            <person name="Fouts D.E."/>
            <person name="Archer G.L."/>
            <person name="Mongodin E.F."/>
            <person name="DeBoy R.T."/>
            <person name="Ravel J."/>
            <person name="Paulsen I.T."/>
            <person name="Kolonay J.F."/>
            <person name="Brinkac L.M."/>
            <person name="Beanan M.J."/>
            <person name="Dodson R.J."/>
            <person name="Daugherty S.C."/>
            <person name="Madupu R."/>
            <person name="Angiuoli S.V."/>
            <person name="Durkin A.S."/>
            <person name="Haft D.H."/>
            <person name="Vamathevan J.J."/>
            <person name="Khouri H."/>
            <person name="Utterback T.R."/>
            <person name="Lee C."/>
            <person name="Dimitrov G."/>
            <person name="Jiang L."/>
            <person name="Qin H."/>
            <person name="Weidman J."/>
            <person name="Tran K."/>
            <person name="Kang K.H."/>
            <person name="Hance I.R."/>
            <person name="Nelson K.E."/>
            <person name="Fraser C.M."/>
        </authorList>
    </citation>
    <scope>NUCLEOTIDE SEQUENCE [LARGE SCALE GENOMIC DNA]</scope>
    <source>
        <strain>COL</strain>
    </source>
</reference>
<comment type="function">
    <text evidence="1">Toxin that seems to act by forming pores in the membrane of the cell. Has a hemolytic and a leucotoxic activity (By similarity).</text>
</comment>
<comment type="subunit">
    <text evidence="1">Toxicity requires sequential binding and synergistic association of a class S and a class F component which form heterooligomeric complexes. HlgC (class S) associates with HlgB (class F) thus forming an CB toxin (By similarity).</text>
</comment>
<comment type="similarity">
    <text evidence="3">Belongs to the aerolysin family.</text>
</comment>
<dbReference type="EMBL" id="CP000046">
    <property type="protein sequence ID" value="AAW37245.1"/>
    <property type="molecule type" value="Genomic_DNA"/>
</dbReference>
<dbReference type="RefSeq" id="WP_000916712.1">
    <property type="nucleotide sequence ID" value="NC_002951.2"/>
</dbReference>
<dbReference type="SMR" id="Q5HDD4"/>
<dbReference type="KEGG" id="sac:SACOL2421"/>
<dbReference type="HOGENOM" id="CLU_075311_0_0_9"/>
<dbReference type="Proteomes" id="UP000000530">
    <property type="component" value="Chromosome"/>
</dbReference>
<dbReference type="GO" id="GO:0005576">
    <property type="term" value="C:extracellular region"/>
    <property type="evidence" value="ECO:0007669"/>
    <property type="project" value="InterPro"/>
</dbReference>
<dbReference type="GO" id="GO:0090729">
    <property type="term" value="F:toxin activity"/>
    <property type="evidence" value="ECO:0007669"/>
    <property type="project" value="UniProtKB-KW"/>
</dbReference>
<dbReference type="GO" id="GO:0051715">
    <property type="term" value="P:cytolysis in another organism"/>
    <property type="evidence" value="ECO:0007669"/>
    <property type="project" value="InterPro"/>
</dbReference>
<dbReference type="Gene3D" id="2.70.240.10">
    <property type="entry name" value="Leukocidin/porin MspA"/>
    <property type="match status" value="1"/>
</dbReference>
<dbReference type="InterPro" id="IPR003963">
    <property type="entry name" value="Bi-component_toxin_staph"/>
</dbReference>
<dbReference type="InterPro" id="IPR016183">
    <property type="entry name" value="Leukocidin/Hemolysin_toxin"/>
</dbReference>
<dbReference type="InterPro" id="IPR036435">
    <property type="entry name" value="Leukocidin/porin_MspA_sf"/>
</dbReference>
<dbReference type="NCBIfam" id="TIGR01002">
    <property type="entry name" value="hlyII"/>
    <property type="match status" value="1"/>
</dbReference>
<dbReference type="Pfam" id="PF07968">
    <property type="entry name" value="Leukocidin"/>
    <property type="match status" value="1"/>
</dbReference>
<dbReference type="PRINTS" id="PR01468">
    <property type="entry name" value="BICOMPNTOXIN"/>
</dbReference>
<dbReference type="SUPFAM" id="SSF56959">
    <property type="entry name" value="Leukocidin-like"/>
    <property type="match status" value="1"/>
</dbReference>
<gene>
    <name type="primary">hlgC</name>
    <name type="ordered locus">SACOL2421</name>
</gene>
<sequence>MLKNKILTTTLSVSLLAPLANPLLENAKAANDTEDIGKGSDIEIIKRTEDKTSNKWGVTQNIQFDFVKDKKYNKDALILKMQGFISSRTTYYNYKKTNHVKAMRWPFQYNIGLKTNDKYVSLINYLPKNKIESTNVSQILGYNIGGNFQSAPSLGGNGSFNYSKSISYTQQNYVSEVEQQNSKSVLWGVKANSFATESGQKSAFDSDLFVGYKPHSKDPRDYFVPDSELPPLVQSGFNPSFIATVSHEKGSSDTSEFEITYGRNMDVTHAIKRSTHYGNSYLDGHRVHNAFVNRNYTVKYEVNWKTHEIKVKGQN</sequence>
<evidence type="ECO:0000250" key="1"/>
<evidence type="ECO:0000255" key="2"/>
<evidence type="ECO:0000305" key="3"/>
<accession>Q5HDD4</accession>
<feature type="signal peptide" evidence="2">
    <location>
        <begin position="1"/>
        <end position="29"/>
    </location>
</feature>
<feature type="chain" id="PRO_0000045220" description="Gamma-hemolysin component C">
    <location>
        <begin position="30"/>
        <end position="315"/>
    </location>
</feature>
<organism>
    <name type="scientific">Staphylococcus aureus (strain COL)</name>
    <dbReference type="NCBI Taxonomy" id="93062"/>
    <lineage>
        <taxon>Bacteria</taxon>
        <taxon>Bacillati</taxon>
        <taxon>Bacillota</taxon>
        <taxon>Bacilli</taxon>
        <taxon>Bacillales</taxon>
        <taxon>Staphylococcaceae</taxon>
        <taxon>Staphylococcus</taxon>
    </lineage>
</organism>
<protein>
    <recommendedName>
        <fullName>Gamma-hemolysin component C</fullName>
    </recommendedName>
</protein>